<dbReference type="EMBL" id="AJ271472">
    <property type="protein sequence ID" value="CAB69043.1"/>
    <property type="molecule type" value="mRNA"/>
</dbReference>
<dbReference type="EMBL" id="AF296833">
    <property type="status" value="NOT_ANNOTATED_CDS"/>
    <property type="molecule type" value="Genomic_DNA"/>
</dbReference>
<dbReference type="EMBL" id="CP002688">
    <property type="protein sequence ID" value="AED92853.1"/>
    <property type="molecule type" value="Genomic_DNA"/>
</dbReference>
<dbReference type="EMBL" id="BT002005">
    <property type="protein sequence ID" value="AAN72016.1"/>
    <property type="molecule type" value="mRNA"/>
</dbReference>
<dbReference type="EMBL" id="BT002008">
    <property type="protein sequence ID" value="AAN72019.1"/>
    <property type="molecule type" value="mRNA"/>
</dbReference>
<dbReference type="EMBL" id="BT025498">
    <property type="protein sequence ID" value="ABF58916.1"/>
    <property type="molecule type" value="mRNA"/>
</dbReference>
<dbReference type="EMBL" id="AY084705">
    <property type="protein sequence ID" value="AAM61279.1"/>
    <property type="molecule type" value="mRNA"/>
</dbReference>
<dbReference type="RefSeq" id="NP_197550.1">
    <property type="nucleotide sequence ID" value="NM_122057.4"/>
</dbReference>
<dbReference type="SMR" id="Q8LFQ6"/>
<dbReference type="BioGRID" id="17448">
    <property type="interactions" value="1"/>
</dbReference>
<dbReference type="FunCoup" id="Q8LFQ6">
    <property type="interactions" value="2246"/>
</dbReference>
<dbReference type="STRING" id="3702.Q8LFQ6"/>
<dbReference type="PaxDb" id="3702-AT5G20500.1"/>
<dbReference type="ProteomicsDB" id="222364"/>
<dbReference type="EnsemblPlants" id="AT5G20500.1">
    <property type="protein sequence ID" value="AT5G20500.1"/>
    <property type="gene ID" value="AT5G20500"/>
</dbReference>
<dbReference type="GeneID" id="832172"/>
<dbReference type="Gramene" id="AT5G20500.1">
    <property type="protein sequence ID" value="AT5G20500.1"/>
    <property type="gene ID" value="AT5G20500"/>
</dbReference>
<dbReference type="KEGG" id="ath:AT5G20500"/>
<dbReference type="Araport" id="AT5G20500"/>
<dbReference type="TAIR" id="AT5G20500"/>
<dbReference type="eggNOG" id="KOG1752">
    <property type="taxonomic scope" value="Eukaryota"/>
</dbReference>
<dbReference type="HOGENOM" id="CLU_026126_7_2_1"/>
<dbReference type="InParanoid" id="Q8LFQ6"/>
<dbReference type="OMA" id="DSTHAQF"/>
<dbReference type="OrthoDB" id="418495at2759"/>
<dbReference type="PhylomeDB" id="Q8LFQ6"/>
<dbReference type="PRO" id="PR:Q8LFQ6"/>
<dbReference type="Proteomes" id="UP000006548">
    <property type="component" value="Chromosome 5"/>
</dbReference>
<dbReference type="ExpressionAtlas" id="Q8LFQ6">
    <property type="expression patterns" value="baseline and differential"/>
</dbReference>
<dbReference type="GO" id="GO:0005783">
    <property type="term" value="C:endoplasmic reticulum"/>
    <property type="evidence" value="ECO:0007005"/>
    <property type="project" value="TAIR"/>
</dbReference>
<dbReference type="GO" id="GO:0005794">
    <property type="term" value="C:Golgi apparatus"/>
    <property type="evidence" value="ECO:0007005"/>
    <property type="project" value="TAIR"/>
</dbReference>
<dbReference type="GO" id="GO:0009536">
    <property type="term" value="C:plastid"/>
    <property type="evidence" value="ECO:0007005"/>
    <property type="project" value="TAIR"/>
</dbReference>
<dbReference type="GO" id="GO:0099503">
    <property type="term" value="C:secretory vesicle"/>
    <property type="evidence" value="ECO:0007005"/>
    <property type="project" value="TAIR"/>
</dbReference>
<dbReference type="GO" id="GO:0005773">
    <property type="term" value="C:vacuole"/>
    <property type="evidence" value="ECO:0000314"/>
    <property type="project" value="TAIR"/>
</dbReference>
<dbReference type="CDD" id="cd03419">
    <property type="entry name" value="GRX_GRXh_1_2_like"/>
    <property type="match status" value="1"/>
</dbReference>
<dbReference type="FunFam" id="3.40.30.10:FF:000026">
    <property type="entry name" value="Glutaredoxin 2"/>
    <property type="match status" value="1"/>
</dbReference>
<dbReference type="Gene3D" id="3.40.30.10">
    <property type="entry name" value="Glutaredoxin"/>
    <property type="match status" value="1"/>
</dbReference>
<dbReference type="InterPro" id="IPR011767">
    <property type="entry name" value="GLR_AS"/>
</dbReference>
<dbReference type="InterPro" id="IPR002109">
    <property type="entry name" value="Glutaredoxin"/>
</dbReference>
<dbReference type="InterPro" id="IPR011899">
    <property type="entry name" value="Glutaredoxin_euk/vir"/>
</dbReference>
<dbReference type="InterPro" id="IPR014025">
    <property type="entry name" value="Glutaredoxin_subgr"/>
</dbReference>
<dbReference type="InterPro" id="IPR036249">
    <property type="entry name" value="Thioredoxin-like_sf"/>
</dbReference>
<dbReference type="NCBIfam" id="TIGR02180">
    <property type="entry name" value="GRX_euk"/>
    <property type="match status" value="1"/>
</dbReference>
<dbReference type="PANTHER" id="PTHR45694">
    <property type="entry name" value="GLUTAREDOXIN 2"/>
    <property type="match status" value="1"/>
</dbReference>
<dbReference type="PANTHER" id="PTHR45694:SF5">
    <property type="entry name" value="GLUTAREDOXIN 2"/>
    <property type="match status" value="1"/>
</dbReference>
<dbReference type="Pfam" id="PF00462">
    <property type="entry name" value="Glutaredoxin"/>
    <property type="match status" value="1"/>
</dbReference>
<dbReference type="PRINTS" id="PR00160">
    <property type="entry name" value="GLUTAREDOXIN"/>
</dbReference>
<dbReference type="SUPFAM" id="SSF52833">
    <property type="entry name" value="Thioredoxin-like"/>
    <property type="match status" value="1"/>
</dbReference>
<dbReference type="PROSITE" id="PS00195">
    <property type="entry name" value="GLUTAREDOXIN_1"/>
    <property type="match status" value="1"/>
</dbReference>
<dbReference type="PROSITE" id="PS51354">
    <property type="entry name" value="GLUTAREDOXIN_2"/>
    <property type="match status" value="1"/>
</dbReference>
<gene>
    <name type="primary">GRXC4</name>
    <name type="synonym">GLU1</name>
    <name type="ordered locus">At5g20500</name>
    <name type="ORF">F7C8.90</name>
</gene>
<name>GRXC4_ARATH</name>
<organism>
    <name type="scientific">Arabidopsis thaliana</name>
    <name type="common">Mouse-ear cress</name>
    <dbReference type="NCBI Taxonomy" id="3702"/>
    <lineage>
        <taxon>Eukaryota</taxon>
        <taxon>Viridiplantae</taxon>
        <taxon>Streptophyta</taxon>
        <taxon>Embryophyta</taxon>
        <taxon>Tracheophyta</taxon>
        <taxon>Spermatophyta</taxon>
        <taxon>Magnoliopsida</taxon>
        <taxon>eudicotyledons</taxon>
        <taxon>Gunneridae</taxon>
        <taxon>Pentapetalae</taxon>
        <taxon>rosids</taxon>
        <taxon>malvids</taxon>
        <taxon>Brassicales</taxon>
        <taxon>Brassicaceae</taxon>
        <taxon>Camelineae</taxon>
        <taxon>Arabidopsis</taxon>
    </lineage>
</organism>
<sequence>MTMFRSISMVMLLVALVTFISMVSSAASSPEADFVKKTISSHKIVIFSKSYCPYCKKAKSVFRELDQVPYVVELDEREDGWSIQTALGEIVGRRTVPQVFINGKHLGGSDDTVDAYESGELAKLLGVSGNKEAEL</sequence>
<reference key="1">
    <citation type="thesis" date="2000" institute="University of Cambridge" country="United Kingdom">
        <authorList>
            <person name="Mahon P."/>
        </authorList>
    </citation>
    <scope>NUCLEOTIDE SEQUENCE [MRNA]</scope>
</reference>
<reference key="2">
    <citation type="journal article" date="2000" name="Nature">
        <title>Sequence and analysis of chromosome 5 of the plant Arabidopsis thaliana.</title>
        <authorList>
            <person name="Tabata S."/>
            <person name="Kaneko T."/>
            <person name="Nakamura Y."/>
            <person name="Kotani H."/>
            <person name="Kato T."/>
            <person name="Asamizu E."/>
            <person name="Miyajima N."/>
            <person name="Sasamoto S."/>
            <person name="Kimura T."/>
            <person name="Hosouchi T."/>
            <person name="Kawashima K."/>
            <person name="Kohara M."/>
            <person name="Matsumoto M."/>
            <person name="Matsuno A."/>
            <person name="Muraki A."/>
            <person name="Nakayama S."/>
            <person name="Nakazaki N."/>
            <person name="Naruo K."/>
            <person name="Okumura S."/>
            <person name="Shinpo S."/>
            <person name="Takeuchi C."/>
            <person name="Wada T."/>
            <person name="Watanabe A."/>
            <person name="Yamada M."/>
            <person name="Yasuda M."/>
            <person name="Sato S."/>
            <person name="de la Bastide M."/>
            <person name="Huang E."/>
            <person name="Spiegel L."/>
            <person name="Gnoj L."/>
            <person name="O'Shaughnessy A."/>
            <person name="Preston R."/>
            <person name="Habermann K."/>
            <person name="Murray J."/>
            <person name="Johnson D."/>
            <person name="Rohlfing T."/>
            <person name="Nelson J."/>
            <person name="Stoneking T."/>
            <person name="Pepin K."/>
            <person name="Spieth J."/>
            <person name="Sekhon M."/>
            <person name="Armstrong J."/>
            <person name="Becker M."/>
            <person name="Belter E."/>
            <person name="Cordum H."/>
            <person name="Cordes M."/>
            <person name="Courtney L."/>
            <person name="Courtney W."/>
            <person name="Dante M."/>
            <person name="Du H."/>
            <person name="Edwards J."/>
            <person name="Fryman J."/>
            <person name="Haakensen B."/>
            <person name="Lamar E."/>
            <person name="Latreille P."/>
            <person name="Leonard S."/>
            <person name="Meyer R."/>
            <person name="Mulvaney E."/>
            <person name="Ozersky P."/>
            <person name="Riley A."/>
            <person name="Strowmatt C."/>
            <person name="Wagner-McPherson C."/>
            <person name="Wollam A."/>
            <person name="Yoakum M."/>
            <person name="Bell M."/>
            <person name="Dedhia N."/>
            <person name="Parnell L."/>
            <person name="Shah R."/>
            <person name="Rodriguez M."/>
            <person name="Hoon See L."/>
            <person name="Vil D."/>
            <person name="Baker J."/>
            <person name="Kirchoff K."/>
            <person name="Toth K."/>
            <person name="King L."/>
            <person name="Bahret A."/>
            <person name="Miller B."/>
            <person name="Marra M.A."/>
            <person name="Martienssen R."/>
            <person name="McCombie W.R."/>
            <person name="Wilson R.K."/>
            <person name="Murphy G."/>
            <person name="Bancroft I."/>
            <person name="Volckaert G."/>
            <person name="Wambutt R."/>
            <person name="Duesterhoeft A."/>
            <person name="Stiekema W."/>
            <person name="Pohl T."/>
            <person name="Entian K.-D."/>
            <person name="Terryn N."/>
            <person name="Hartley N."/>
            <person name="Bent E."/>
            <person name="Johnson S."/>
            <person name="Langham S.-A."/>
            <person name="McCullagh B."/>
            <person name="Robben J."/>
            <person name="Grymonprez B."/>
            <person name="Zimmermann W."/>
            <person name="Ramsperger U."/>
            <person name="Wedler H."/>
            <person name="Balke K."/>
            <person name="Wedler E."/>
            <person name="Peters S."/>
            <person name="van Staveren M."/>
            <person name="Dirkse W."/>
            <person name="Mooijman P."/>
            <person name="Klein Lankhorst R."/>
            <person name="Weitzenegger T."/>
            <person name="Bothe G."/>
            <person name="Rose M."/>
            <person name="Hauf J."/>
            <person name="Berneiser S."/>
            <person name="Hempel S."/>
            <person name="Feldpausch M."/>
            <person name="Lamberth S."/>
            <person name="Villarroel R."/>
            <person name="Gielen J."/>
            <person name="Ardiles W."/>
            <person name="Bents O."/>
            <person name="Lemcke K."/>
            <person name="Kolesov G."/>
            <person name="Mayer K.F.X."/>
            <person name="Rudd S."/>
            <person name="Schoof H."/>
            <person name="Schueller C."/>
            <person name="Zaccaria P."/>
            <person name="Mewes H.-W."/>
            <person name="Bevan M."/>
            <person name="Fransz P.F."/>
        </authorList>
    </citation>
    <scope>NUCLEOTIDE SEQUENCE [LARGE SCALE GENOMIC DNA]</scope>
    <source>
        <strain>cv. Columbia</strain>
    </source>
</reference>
<reference key="3">
    <citation type="journal article" date="2017" name="Plant J.">
        <title>Araport11: a complete reannotation of the Arabidopsis thaliana reference genome.</title>
        <authorList>
            <person name="Cheng C.Y."/>
            <person name="Krishnakumar V."/>
            <person name="Chan A.P."/>
            <person name="Thibaud-Nissen F."/>
            <person name="Schobel S."/>
            <person name="Town C.D."/>
        </authorList>
    </citation>
    <scope>GENOME REANNOTATION</scope>
    <source>
        <strain>cv. Columbia</strain>
    </source>
</reference>
<reference key="4">
    <citation type="journal article" date="2003" name="Science">
        <title>Empirical analysis of transcriptional activity in the Arabidopsis genome.</title>
        <authorList>
            <person name="Yamada K."/>
            <person name="Lim J."/>
            <person name="Dale J.M."/>
            <person name="Chen H."/>
            <person name="Shinn P."/>
            <person name="Palm C.J."/>
            <person name="Southwick A.M."/>
            <person name="Wu H.C."/>
            <person name="Kim C.J."/>
            <person name="Nguyen M."/>
            <person name="Pham P.K."/>
            <person name="Cheuk R.F."/>
            <person name="Karlin-Newmann G."/>
            <person name="Liu S.X."/>
            <person name="Lam B."/>
            <person name="Sakano H."/>
            <person name="Wu T."/>
            <person name="Yu G."/>
            <person name="Miranda M."/>
            <person name="Quach H.L."/>
            <person name="Tripp M."/>
            <person name="Chang C.H."/>
            <person name="Lee J.M."/>
            <person name="Toriumi M.J."/>
            <person name="Chan M.M."/>
            <person name="Tang C.C."/>
            <person name="Onodera C.S."/>
            <person name="Deng J.M."/>
            <person name="Akiyama K."/>
            <person name="Ansari Y."/>
            <person name="Arakawa T."/>
            <person name="Banh J."/>
            <person name="Banno F."/>
            <person name="Bowser L."/>
            <person name="Brooks S.Y."/>
            <person name="Carninci P."/>
            <person name="Chao Q."/>
            <person name="Choy N."/>
            <person name="Enju A."/>
            <person name="Goldsmith A.D."/>
            <person name="Gurjal M."/>
            <person name="Hansen N.F."/>
            <person name="Hayashizaki Y."/>
            <person name="Johnson-Hopson C."/>
            <person name="Hsuan V.W."/>
            <person name="Iida K."/>
            <person name="Karnes M."/>
            <person name="Khan S."/>
            <person name="Koesema E."/>
            <person name="Ishida J."/>
            <person name="Jiang P.X."/>
            <person name="Jones T."/>
            <person name="Kawai J."/>
            <person name="Kamiya A."/>
            <person name="Meyers C."/>
            <person name="Nakajima M."/>
            <person name="Narusaka M."/>
            <person name="Seki M."/>
            <person name="Sakurai T."/>
            <person name="Satou M."/>
            <person name="Tamse R."/>
            <person name="Vaysberg M."/>
            <person name="Wallender E.K."/>
            <person name="Wong C."/>
            <person name="Yamamura Y."/>
            <person name="Yuan S."/>
            <person name="Shinozaki K."/>
            <person name="Davis R.W."/>
            <person name="Theologis A."/>
            <person name="Ecker J.R."/>
        </authorList>
    </citation>
    <scope>NUCLEOTIDE SEQUENCE [LARGE SCALE MRNA]</scope>
    <source>
        <strain>cv. Columbia</strain>
    </source>
</reference>
<reference key="5">
    <citation type="submission" date="2006-05" db="EMBL/GenBank/DDBJ databases">
        <title>Arabidopsis ORF clones.</title>
        <authorList>
            <person name="Kim C.J."/>
            <person name="Chen H."/>
            <person name="Quinitio C."/>
            <person name="Shinn P."/>
            <person name="Ecker J.R."/>
        </authorList>
    </citation>
    <scope>NUCLEOTIDE SEQUENCE [LARGE SCALE MRNA]</scope>
    <source>
        <strain>cv. Columbia</strain>
    </source>
</reference>
<reference key="6">
    <citation type="submission" date="2002-03" db="EMBL/GenBank/DDBJ databases">
        <title>Full-length cDNA from Arabidopsis thaliana.</title>
        <authorList>
            <person name="Brover V.V."/>
            <person name="Troukhan M.E."/>
            <person name="Alexandrov N.A."/>
            <person name="Lu Y.-P."/>
            <person name="Flavell R.B."/>
            <person name="Feldmann K.A."/>
        </authorList>
    </citation>
    <scope>NUCLEOTIDE SEQUENCE [LARGE SCALE MRNA]</scope>
</reference>
<reference key="7">
    <citation type="journal article" date="2004" name="Cell. Mol. Life Sci.">
        <title>Plant glutaredoxins: still mysterious reducing systems.</title>
        <authorList>
            <person name="Rouhier N."/>
            <person name="Gelhaye E."/>
            <person name="Jacquot J.-P."/>
        </authorList>
    </citation>
    <scope>GENE FAMILY</scope>
    <scope>NOMENCLATURE</scope>
</reference>
<reference key="8">
    <citation type="journal article" date="2006" name="J. Exp. Bot.">
        <title>Genome-wide analysis of plant glutaredoxin systems.</title>
        <authorList>
            <person name="Rouhier N."/>
            <person name="Couturier J."/>
            <person name="Jacquot J.-P."/>
        </authorList>
    </citation>
    <scope>GENE FAMILY</scope>
</reference>
<accession>Q8LFQ6</accession>
<accession>Q9M457</accession>
<protein>
    <recommendedName>
        <fullName>Glutaredoxin-C4</fullName>
        <shortName>AtGrxC4</shortName>
    </recommendedName>
</protein>
<proteinExistence type="evidence at transcript level"/>
<keyword id="KW-0963">Cytoplasm</keyword>
<keyword id="KW-1015">Disulfide bond</keyword>
<keyword id="KW-0249">Electron transport</keyword>
<keyword id="KW-0676">Redox-active center</keyword>
<keyword id="KW-1185">Reference proteome</keyword>
<keyword id="KW-0813">Transport</keyword>
<evidence type="ECO:0000250" key="1"/>
<evidence type="ECO:0000255" key="2">
    <source>
        <dbReference type="PROSITE-ProRule" id="PRU00686"/>
    </source>
</evidence>
<evidence type="ECO:0000305" key="3"/>
<comment type="function">
    <text evidence="1">Has a glutathione-disulfide oxidoreductase activity in the presence of NADPH and glutathione reductase. Reduces low molecular weight disulfides and proteins (By similarity).</text>
</comment>
<comment type="subcellular location">
    <subcellularLocation>
        <location evidence="1">Cytoplasm</location>
    </subcellularLocation>
</comment>
<comment type="similarity">
    <text evidence="3">Belongs to the glutaredoxin family. CPYC subfamily.</text>
</comment>
<feature type="chain" id="PRO_0000268711" description="Glutaredoxin-C4">
    <location>
        <begin position="1"/>
        <end position="135"/>
    </location>
</feature>
<feature type="domain" description="Glutaredoxin" evidence="2">
    <location>
        <begin position="32"/>
        <end position="132"/>
    </location>
</feature>
<feature type="disulfide bond" description="Redox-active" evidence="1">
    <location>
        <begin position="52"/>
        <end position="55"/>
    </location>
</feature>
<feature type="sequence conflict" description="In Ref. 6; AAM61279." evidence="3" ref="6">
    <original>K</original>
    <variation>N</variation>
    <location>
        <position position="56"/>
    </location>
</feature>